<name>MOBA_THEGJ</name>
<proteinExistence type="inferred from homology"/>
<reference key="1">
    <citation type="journal article" date="2007" name="Genome Biol.">
        <title>Genome analysis and genome-wide proteomics of Thermococcus gammatolerans, the most radioresistant organism known amongst the Archaea.</title>
        <authorList>
            <person name="Zivanovic Y."/>
            <person name="Armengaud J."/>
            <person name="Lagorce A."/>
            <person name="Leplat C."/>
            <person name="Guerin P."/>
            <person name="Dutertre M."/>
            <person name="Anthouard V."/>
            <person name="Forterre P."/>
            <person name="Wincker P."/>
            <person name="Confalonieri F."/>
        </authorList>
    </citation>
    <scope>NUCLEOTIDE SEQUENCE [LARGE SCALE GENOMIC DNA]</scope>
    <source>
        <strain>DSM 15229 / JCM 11827 / EJ3</strain>
    </source>
</reference>
<dbReference type="EC" id="2.7.7.77" evidence="1"/>
<dbReference type="EMBL" id="CP001398">
    <property type="protein sequence ID" value="ACS32741.1"/>
    <property type="molecule type" value="Genomic_DNA"/>
</dbReference>
<dbReference type="RefSeq" id="WP_015857860.1">
    <property type="nucleotide sequence ID" value="NC_012804.1"/>
</dbReference>
<dbReference type="SMR" id="C5A3C9"/>
<dbReference type="STRING" id="593117.TGAM_0239"/>
<dbReference type="PaxDb" id="593117-TGAM_0239"/>
<dbReference type="GeneID" id="7988814"/>
<dbReference type="KEGG" id="tga:TGAM_0239"/>
<dbReference type="PATRIC" id="fig|593117.10.peg.242"/>
<dbReference type="eggNOG" id="arCOG01872">
    <property type="taxonomic scope" value="Archaea"/>
</dbReference>
<dbReference type="HOGENOM" id="CLU_055597_2_2_2"/>
<dbReference type="OrthoDB" id="28434at2157"/>
<dbReference type="Proteomes" id="UP000001488">
    <property type="component" value="Chromosome"/>
</dbReference>
<dbReference type="GO" id="GO:0005737">
    <property type="term" value="C:cytoplasm"/>
    <property type="evidence" value="ECO:0007669"/>
    <property type="project" value="UniProtKB-SubCell"/>
</dbReference>
<dbReference type="GO" id="GO:0005525">
    <property type="term" value="F:GTP binding"/>
    <property type="evidence" value="ECO:0007669"/>
    <property type="project" value="UniProtKB-UniRule"/>
</dbReference>
<dbReference type="GO" id="GO:0046872">
    <property type="term" value="F:metal ion binding"/>
    <property type="evidence" value="ECO:0007669"/>
    <property type="project" value="UniProtKB-KW"/>
</dbReference>
<dbReference type="GO" id="GO:0061603">
    <property type="term" value="F:molybdenum cofactor guanylyltransferase activity"/>
    <property type="evidence" value="ECO:0007669"/>
    <property type="project" value="UniProtKB-EC"/>
</dbReference>
<dbReference type="GO" id="GO:0006777">
    <property type="term" value="P:Mo-molybdopterin cofactor biosynthetic process"/>
    <property type="evidence" value="ECO:0007669"/>
    <property type="project" value="UniProtKB-KW"/>
</dbReference>
<dbReference type="CDD" id="cd02503">
    <property type="entry name" value="MobA"/>
    <property type="match status" value="1"/>
</dbReference>
<dbReference type="Gene3D" id="3.90.550.10">
    <property type="entry name" value="Spore Coat Polysaccharide Biosynthesis Protein SpsA, Chain A"/>
    <property type="match status" value="1"/>
</dbReference>
<dbReference type="HAMAP" id="MF_00316">
    <property type="entry name" value="MobA"/>
    <property type="match status" value="1"/>
</dbReference>
<dbReference type="InterPro" id="IPR025877">
    <property type="entry name" value="MobA-like_NTP_Trfase"/>
</dbReference>
<dbReference type="InterPro" id="IPR013482">
    <property type="entry name" value="Molybde_CF_guanTrfase"/>
</dbReference>
<dbReference type="InterPro" id="IPR029044">
    <property type="entry name" value="Nucleotide-diphossugar_trans"/>
</dbReference>
<dbReference type="NCBIfam" id="NF001457">
    <property type="entry name" value="PRK00317.1-3"/>
    <property type="match status" value="1"/>
</dbReference>
<dbReference type="PANTHER" id="PTHR19136">
    <property type="entry name" value="MOLYBDENUM COFACTOR GUANYLYLTRANSFERASE"/>
    <property type="match status" value="1"/>
</dbReference>
<dbReference type="PANTHER" id="PTHR19136:SF81">
    <property type="entry name" value="MOLYBDENUM COFACTOR GUANYLYLTRANSFERASE"/>
    <property type="match status" value="1"/>
</dbReference>
<dbReference type="Pfam" id="PF12804">
    <property type="entry name" value="NTP_transf_3"/>
    <property type="match status" value="1"/>
</dbReference>
<dbReference type="SUPFAM" id="SSF53448">
    <property type="entry name" value="Nucleotide-diphospho-sugar transferases"/>
    <property type="match status" value="1"/>
</dbReference>
<comment type="function">
    <text evidence="1">Transfers a GMP moiety from GTP to Mo-molybdopterin (Mo-MPT) cofactor (Moco or molybdenum cofactor) to form Mo-molybdopterin guanine dinucleotide (Mo-MGD) cofactor.</text>
</comment>
<comment type="catalytic activity">
    <reaction evidence="1">
        <text>Mo-molybdopterin + GTP + H(+) = Mo-molybdopterin guanine dinucleotide + diphosphate</text>
        <dbReference type="Rhea" id="RHEA:34243"/>
        <dbReference type="ChEBI" id="CHEBI:15378"/>
        <dbReference type="ChEBI" id="CHEBI:33019"/>
        <dbReference type="ChEBI" id="CHEBI:37565"/>
        <dbReference type="ChEBI" id="CHEBI:71302"/>
        <dbReference type="ChEBI" id="CHEBI:71310"/>
        <dbReference type="EC" id="2.7.7.77"/>
    </reaction>
</comment>
<comment type="cofactor">
    <cofactor evidence="1">
        <name>Mg(2+)</name>
        <dbReference type="ChEBI" id="CHEBI:18420"/>
    </cofactor>
</comment>
<comment type="subcellular location">
    <subcellularLocation>
        <location evidence="1">Cytoplasm</location>
    </subcellularLocation>
</comment>
<comment type="domain">
    <text evidence="1">The N-terminal domain determines nucleotide recognition and specific binding, while the C-terminal domain determines the specific binding to the target protein.</text>
</comment>
<comment type="similarity">
    <text evidence="1">Belongs to the MobA family.</text>
</comment>
<protein>
    <recommendedName>
        <fullName evidence="1">Probable molybdenum cofactor guanylyltransferase</fullName>
        <shortName evidence="1">MoCo guanylyltransferase</shortName>
        <ecNumber evidence="1">2.7.7.77</ecNumber>
    </recommendedName>
    <alternativeName>
        <fullName evidence="1">GTP:molybdopterin guanylyltransferase</fullName>
    </alternativeName>
    <alternativeName>
        <fullName evidence="1">Mo-MPT guanylyltransferase</fullName>
    </alternativeName>
    <alternativeName>
        <fullName evidence="1">Molybdopterin guanylyltransferase</fullName>
    </alternativeName>
    <alternativeName>
        <fullName evidence="1">Molybdopterin-guanine dinucleotide synthase</fullName>
        <shortName evidence="1">MGD synthase</shortName>
    </alternativeName>
</protein>
<accession>C5A3C9</accession>
<keyword id="KW-0963">Cytoplasm</keyword>
<keyword id="KW-0342">GTP-binding</keyword>
<keyword id="KW-0460">Magnesium</keyword>
<keyword id="KW-0479">Metal-binding</keyword>
<keyword id="KW-0501">Molybdenum cofactor biosynthesis</keyword>
<keyword id="KW-0547">Nucleotide-binding</keyword>
<keyword id="KW-1185">Reference proteome</keyword>
<keyword id="KW-0808">Transferase</keyword>
<organism>
    <name type="scientific">Thermococcus gammatolerans (strain DSM 15229 / JCM 11827 / EJ3)</name>
    <dbReference type="NCBI Taxonomy" id="593117"/>
    <lineage>
        <taxon>Archaea</taxon>
        <taxon>Methanobacteriati</taxon>
        <taxon>Methanobacteriota</taxon>
        <taxon>Thermococci</taxon>
        <taxon>Thermococcales</taxon>
        <taxon>Thermococcaceae</taxon>
        <taxon>Thermococcus</taxon>
    </lineage>
</organism>
<gene>
    <name evidence="1" type="primary">mobA</name>
    <name type="ordered locus">TGAM_0239</name>
</gene>
<evidence type="ECO:0000255" key="1">
    <source>
        <dbReference type="HAMAP-Rule" id="MF_00316"/>
    </source>
</evidence>
<sequence>MIGAVLAGGRGKRFGGDKLLYRINGKPLILYTIERLETAKKIDEIILVASKDNAEKLEKLGYRVVVDNLLIGPMGGVYTALSLGDAFVVAGDMPLLVPEFVDFIISEFKKSGKTACVPRWENGYLEPLHAAYSSAFREVLEEKIKAGNYALNRAIREVNPCYLPIESLPEEWRESFFNVNTREDLGKLHKG</sequence>
<feature type="chain" id="PRO_1000205079" description="Probable molybdenum cofactor guanylyltransferase">
    <location>
        <begin position="1"/>
        <end position="191"/>
    </location>
</feature>
<feature type="binding site" evidence="1">
    <location>
        <begin position="6"/>
        <end position="8"/>
    </location>
    <ligand>
        <name>GTP</name>
        <dbReference type="ChEBI" id="CHEBI:37565"/>
    </ligand>
</feature>
<feature type="binding site" evidence="1">
    <location>
        <position position="18"/>
    </location>
    <ligand>
        <name>GTP</name>
        <dbReference type="ChEBI" id="CHEBI:37565"/>
    </ligand>
</feature>
<feature type="binding site" evidence="1">
    <location>
        <position position="67"/>
    </location>
    <ligand>
        <name>GTP</name>
        <dbReference type="ChEBI" id="CHEBI:37565"/>
    </ligand>
</feature>
<feature type="binding site" evidence="1">
    <location>
        <position position="92"/>
    </location>
    <ligand>
        <name>GTP</name>
        <dbReference type="ChEBI" id="CHEBI:37565"/>
    </ligand>
</feature>
<feature type="binding site" evidence="1">
    <location>
        <position position="92"/>
    </location>
    <ligand>
        <name>Mg(2+)</name>
        <dbReference type="ChEBI" id="CHEBI:18420"/>
    </ligand>
</feature>